<gene>
    <name evidence="6" type="primary">Gp-9</name>
</gene>
<proteinExistence type="inferred from homology"/>
<accession>Q5EP04</accession>
<name>PBGP9_SOLSJ</name>
<feature type="signal peptide" evidence="3">
    <location>
        <begin position="1"/>
        <end position="19"/>
    </location>
</feature>
<feature type="chain" id="PRO_5000094271" description="Pheromone-binding protein Gp-9" evidence="3">
    <location>
        <begin position="20"/>
        <end position="153"/>
    </location>
</feature>
<feature type="disulfide bond" evidence="2">
    <location>
        <begin position="37"/>
        <end position="77"/>
    </location>
</feature>
<feature type="disulfide bond" evidence="2">
    <location>
        <begin position="73"/>
        <end position="129"/>
    </location>
</feature>
<feature type="disulfide bond" evidence="2">
    <location>
        <begin position="118"/>
        <end position="138"/>
    </location>
</feature>
<dbReference type="EMBL" id="AY818627">
    <property type="protein sequence ID" value="AAW80694.1"/>
    <property type="molecule type" value="Genomic_DNA"/>
</dbReference>
<dbReference type="SMR" id="Q5EP04"/>
<dbReference type="GO" id="GO:0005615">
    <property type="term" value="C:extracellular space"/>
    <property type="evidence" value="ECO:0000250"/>
    <property type="project" value="UniProtKB"/>
</dbReference>
<dbReference type="GO" id="GO:0005550">
    <property type="term" value="F:pheromone binding"/>
    <property type="evidence" value="ECO:0007669"/>
    <property type="project" value="UniProtKB-KW"/>
</dbReference>
<dbReference type="GO" id="GO:0019236">
    <property type="term" value="P:response to pheromone"/>
    <property type="evidence" value="ECO:0007669"/>
    <property type="project" value="UniProtKB-KW"/>
</dbReference>
<dbReference type="GO" id="GO:0035176">
    <property type="term" value="P:social behavior"/>
    <property type="evidence" value="ECO:0000250"/>
    <property type="project" value="UniProtKB"/>
</dbReference>
<dbReference type="CDD" id="cd23992">
    <property type="entry name" value="PBP_GOBP"/>
    <property type="match status" value="1"/>
</dbReference>
<dbReference type="FunFam" id="1.10.238.20:FF:000004">
    <property type="entry name" value="Pheromone-binding protein Gp-9"/>
    <property type="match status" value="1"/>
</dbReference>
<dbReference type="Gene3D" id="1.10.238.20">
    <property type="entry name" value="Pheromone/general odorant binding protein domain"/>
    <property type="match status" value="1"/>
</dbReference>
<dbReference type="InterPro" id="IPR006170">
    <property type="entry name" value="PBP/GOBP"/>
</dbReference>
<dbReference type="InterPro" id="IPR036728">
    <property type="entry name" value="PBP_GOBP_sf"/>
</dbReference>
<dbReference type="InterPro" id="IPR022354">
    <property type="entry name" value="Pheromone-bd_protein_Gp-9"/>
</dbReference>
<dbReference type="Pfam" id="PF01395">
    <property type="entry name" value="PBP_GOBP"/>
    <property type="match status" value="1"/>
</dbReference>
<dbReference type="PRINTS" id="PR02007">
    <property type="entry name" value="ODORANTBPGP9"/>
</dbReference>
<dbReference type="SUPFAM" id="SSF47565">
    <property type="entry name" value="Insect pheromone/odorant-binding proteins"/>
    <property type="match status" value="1"/>
</dbReference>
<keyword id="KW-0085">Behavior</keyword>
<keyword id="KW-1015">Disulfide bond</keyword>
<keyword id="KW-0589">Pheromone response</keyword>
<keyword id="KW-0590">Pheromone-binding</keyword>
<keyword id="KW-0964">Secreted</keyword>
<keyword id="KW-0732">Signal</keyword>
<keyword id="KW-0813">Transport</keyword>
<organism>
    <name type="scientific">Solenopsis n. sp. (strain JP-2002)</name>
    <name type="common">Fire ant</name>
    <dbReference type="NCBI Taxonomy" id="310438"/>
    <lineage>
        <taxon>Eukaryota</taxon>
        <taxon>Metazoa</taxon>
        <taxon>Ecdysozoa</taxon>
        <taxon>Arthropoda</taxon>
        <taxon>Hexapoda</taxon>
        <taxon>Insecta</taxon>
        <taxon>Pterygota</taxon>
        <taxon>Neoptera</taxon>
        <taxon>Endopterygota</taxon>
        <taxon>Hymenoptera</taxon>
        <taxon>Apocrita</taxon>
        <taxon>Aculeata</taxon>
        <taxon>Formicoidea</taxon>
        <taxon>Formicidae</taxon>
        <taxon>Myrmicinae</taxon>
        <taxon>Solenopsis</taxon>
    </lineage>
</organism>
<comment type="function">
    <text evidence="3">Colony queen number, a major feature of social organization, is associated with worker genotype for Gp-9. Colonies are headed by either a single reproductive queen (monogyne form) or multiple queens (polygyne form). Differences in worker Gp-9 genotypes between social forms may cause differences in workers' abilities to recognize queens and regulate their numbers (By similarity).</text>
</comment>
<comment type="subunit">
    <text evidence="2">Homodimer.</text>
</comment>
<comment type="subcellular location">
    <subcellularLocation>
        <location evidence="1">Secreted</location>
    </subcellularLocation>
</comment>
<comment type="similarity">
    <text evidence="4">Belongs to the PBP/GOBP family.</text>
</comment>
<reference evidence="5 6" key="1">
    <citation type="journal article" date="2005" name="Mol. Biol. Evol.">
        <title>Molecular evolutionary analyses of the odorant-binding protein gene Gp-9 in fire ants and other Solenopsis species.</title>
        <authorList>
            <person name="Krieger M.J.B."/>
            <person name="Ross K.G."/>
        </authorList>
    </citation>
    <scope>NUCLEOTIDE SEQUENCE [GENOMIC DNA] (ALLELE B)</scope>
</reference>
<evidence type="ECO:0000250" key="1"/>
<evidence type="ECO:0000250" key="2">
    <source>
        <dbReference type="UniProtKB" id="P20797"/>
    </source>
</evidence>
<evidence type="ECO:0000250" key="3">
    <source>
        <dbReference type="UniProtKB" id="Q8WP90"/>
    </source>
</evidence>
<evidence type="ECO:0000255" key="4"/>
<evidence type="ECO:0000305" key="5"/>
<evidence type="ECO:0000312" key="6">
    <source>
        <dbReference type="EMBL" id="AAW80694.1"/>
    </source>
</evidence>
<sequence>MKTFVLHIFIFALVAFASASRDSAKKIGSQYDNYATCLTEHSLTEDDIFSIGEVSSGQHKTNHEETELHKNGCVMQCMLEKDGLMSGADYDEEKMREDYIKETGAQPGDQRIEALNACMHETKDMEDKCDKSLLLVACVLAAEAVLADSNEGA</sequence>
<protein>
    <recommendedName>
        <fullName>Pheromone-binding protein Gp-9</fullName>
        <shortName>PBP</shortName>
    </recommendedName>
    <alternativeName>
        <fullName>Putative odorant-binding protein Gp-9</fullName>
    </alternativeName>
</protein>